<feature type="chain" id="PRO_0000122144" description="Serine--tRNA ligase">
    <location>
        <begin position="1"/>
        <end position="425"/>
    </location>
</feature>
<feature type="binding site" evidence="1">
    <location>
        <begin position="233"/>
        <end position="235"/>
    </location>
    <ligand>
        <name>L-serine</name>
        <dbReference type="ChEBI" id="CHEBI:33384"/>
    </ligand>
</feature>
<feature type="binding site" evidence="1">
    <location>
        <begin position="264"/>
        <end position="266"/>
    </location>
    <ligand>
        <name>ATP</name>
        <dbReference type="ChEBI" id="CHEBI:30616"/>
    </ligand>
</feature>
<feature type="binding site" evidence="1">
    <location>
        <position position="287"/>
    </location>
    <ligand>
        <name>L-serine</name>
        <dbReference type="ChEBI" id="CHEBI:33384"/>
    </ligand>
</feature>
<feature type="binding site" evidence="1">
    <location>
        <begin position="351"/>
        <end position="354"/>
    </location>
    <ligand>
        <name>ATP</name>
        <dbReference type="ChEBI" id="CHEBI:30616"/>
    </ligand>
</feature>
<feature type="binding site" evidence="1">
    <location>
        <position position="387"/>
    </location>
    <ligand>
        <name>L-serine</name>
        <dbReference type="ChEBI" id="CHEBI:33384"/>
    </ligand>
</feature>
<name>SYS_THEMA</name>
<evidence type="ECO:0000255" key="1">
    <source>
        <dbReference type="HAMAP-Rule" id="MF_00176"/>
    </source>
</evidence>
<sequence length="425" mass="48892">MIDIKLIRQNPDFVKEALRKRGEDPAIIDEILKIDADWRATITKTNELRSRRNEISKNVARLKKEGKNAEAEALIEEGKRLGEEIKALEEKEKELQKKLNDLLLMIPNIPHESVPVGEDESQNVEVRRWGEPREFDFTPLAHWDLGPAWGLMDFSRASKLSGSRFTVMYGKLARLERALINFMLDVHTKEHGYTEVWVPHLVKRETITITGQLPKFEEELYLAERDDLFLIPTAEVPLAALHSGEILEEKELPKKYVSYTPCYRREAGSYGKDVRGMIRQHQFDKVELVWVTTPERSFEDLEELVKDAETILRKLELPYRVVSLCTGDLGFTSAKTYDIEVWLPSYNAYKEISSCSNVTDFQARRGNMRYRRRSDGKLEYVHTLNGSGIAVGRALVAILENYQQPDGSVRVPEVLVPYTGFEVIP</sequence>
<gene>
    <name evidence="1" type="primary">serS</name>
    <name type="ordered locus">TM_1379</name>
</gene>
<proteinExistence type="inferred from homology"/>
<keyword id="KW-0030">Aminoacyl-tRNA synthetase</keyword>
<keyword id="KW-0067">ATP-binding</keyword>
<keyword id="KW-0963">Cytoplasm</keyword>
<keyword id="KW-0436">Ligase</keyword>
<keyword id="KW-0547">Nucleotide-binding</keyword>
<keyword id="KW-0648">Protein biosynthesis</keyword>
<keyword id="KW-1185">Reference proteome</keyword>
<comment type="function">
    <text evidence="1">Catalyzes the attachment of serine to tRNA(Ser). Is also able to aminoacylate tRNA(Sec) with serine, to form the misacylated tRNA L-seryl-tRNA(Sec), which will be further converted into selenocysteinyl-tRNA(Sec).</text>
</comment>
<comment type="catalytic activity">
    <reaction evidence="1">
        <text>tRNA(Ser) + L-serine + ATP = L-seryl-tRNA(Ser) + AMP + diphosphate + H(+)</text>
        <dbReference type="Rhea" id="RHEA:12292"/>
        <dbReference type="Rhea" id="RHEA-COMP:9669"/>
        <dbReference type="Rhea" id="RHEA-COMP:9703"/>
        <dbReference type="ChEBI" id="CHEBI:15378"/>
        <dbReference type="ChEBI" id="CHEBI:30616"/>
        <dbReference type="ChEBI" id="CHEBI:33019"/>
        <dbReference type="ChEBI" id="CHEBI:33384"/>
        <dbReference type="ChEBI" id="CHEBI:78442"/>
        <dbReference type="ChEBI" id="CHEBI:78533"/>
        <dbReference type="ChEBI" id="CHEBI:456215"/>
        <dbReference type="EC" id="6.1.1.11"/>
    </reaction>
</comment>
<comment type="catalytic activity">
    <reaction evidence="1">
        <text>tRNA(Sec) + L-serine + ATP = L-seryl-tRNA(Sec) + AMP + diphosphate + H(+)</text>
        <dbReference type="Rhea" id="RHEA:42580"/>
        <dbReference type="Rhea" id="RHEA-COMP:9742"/>
        <dbReference type="Rhea" id="RHEA-COMP:10128"/>
        <dbReference type="ChEBI" id="CHEBI:15378"/>
        <dbReference type="ChEBI" id="CHEBI:30616"/>
        <dbReference type="ChEBI" id="CHEBI:33019"/>
        <dbReference type="ChEBI" id="CHEBI:33384"/>
        <dbReference type="ChEBI" id="CHEBI:78442"/>
        <dbReference type="ChEBI" id="CHEBI:78533"/>
        <dbReference type="ChEBI" id="CHEBI:456215"/>
        <dbReference type="EC" id="6.1.1.11"/>
    </reaction>
</comment>
<comment type="pathway">
    <text evidence="1">Aminoacyl-tRNA biosynthesis; selenocysteinyl-tRNA(Sec) biosynthesis; L-seryl-tRNA(Sec) from L-serine and tRNA(Sec): step 1/1.</text>
</comment>
<comment type="subunit">
    <text evidence="1">Homodimer. The tRNA molecule binds across the dimer.</text>
</comment>
<comment type="subcellular location">
    <subcellularLocation>
        <location evidence="1">Cytoplasm</location>
    </subcellularLocation>
</comment>
<comment type="domain">
    <text evidence="1">Consists of two distinct domains, a catalytic core and a N-terminal extension that is involved in tRNA binding.</text>
</comment>
<comment type="similarity">
    <text evidence="1">Belongs to the class-II aminoacyl-tRNA synthetase family. Type-1 seryl-tRNA synthetase subfamily.</text>
</comment>
<organism>
    <name type="scientific">Thermotoga maritima (strain ATCC 43589 / DSM 3109 / JCM 10099 / NBRC 100826 / MSB8)</name>
    <dbReference type="NCBI Taxonomy" id="243274"/>
    <lineage>
        <taxon>Bacteria</taxon>
        <taxon>Thermotogati</taxon>
        <taxon>Thermotogota</taxon>
        <taxon>Thermotogae</taxon>
        <taxon>Thermotogales</taxon>
        <taxon>Thermotogaceae</taxon>
        <taxon>Thermotoga</taxon>
    </lineage>
</organism>
<protein>
    <recommendedName>
        <fullName evidence="1">Serine--tRNA ligase</fullName>
        <ecNumber evidence="1">6.1.1.11</ecNumber>
    </recommendedName>
    <alternativeName>
        <fullName evidence="1">Seryl-tRNA synthetase</fullName>
        <shortName evidence="1">SerRS</shortName>
    </alternativeName>
    <alternativeName>
        <fullName evidence="1">Seryl-tRNA(Ser/Sec) synthetase</fullName>
    </alternativeName>
</protein>
<accession>Q9X199</accession>
<dbReference type="EC" id="6.1.1.11" evidence="1"/>
<dbReference type="EMBL" id="AE000512">
    <property type="protein sequence ID" value="AAD36449.1"/>
    <property type="molecule type" value="Genomic_DNA"/>
</dbReference>
<dbReference type="PIR" id="D72261">
    <property type="entry name" value="D72261"/>
</dbReference>
<dbReference type="RefSeq" id="NP_229180.1">
    <property type="nucleotide sequence ID" value="NC_000853.1"/>
</dbReference>
<dbReference type="RefSeq" id="WP_004081577.1">
    <property type="nucleotide sequence ID" value="NC_000853.1"/>
</dbReference>
<dbReference type="SMR" id="Q9X199"/>
<dbReference type="FunCoup" id="Q9X199">
    <property type="interactions" value="382"/>
</dbReference>
<dbReference type="STRING" id="243274.TM_1379"/>
<dbReference type="PaxDb" id="243274-THEMA_07430"/>
<dbReference type="EnsemblBacteria" id="AAD36449">
    <property type="protein sequence ID" value="AAD36449"/>
    <property type="gene ID" value="TM_1379"/>
</dbReference>
<dbReference type="KEGG" id="tma:TM1379"/>
<dbReference type="KEGG" id="tmi:THEMA_07430"/>
<dbReference type="KEGG" id="tmm:Tmari_1386"/>
<dbReference type="KEGG" id="tmw:THMA_1406"/>
<dbReference type="eggNOG" id="COG0172">
    <property type="taxonomic scope" value="Bacteria"/>
</dbReference>
<dbReference type="InParanoid" id="Q9X199"/>
<dbReference type="OrthoDB" id="9804647at2"/>
<dbReference type="UniPathway" id="UPA00906">
    <property type="reaction ID" value="UER00895"/>
</dbReference>
<dbReference type="Proteomes" id="UP000008183">
    <property type="component" value="Chromosome"/>
</dbReference>
<dbReference type="GO" id="GO:0005737">
    <property type="term" value="C:cytoplasm"/>
    <property type="evidence" value="ECO:0007669"/>
    <property type="project" value="UniProtKB-SubCell"/>
</dbReference>
<dbReference type="GO" id="GO:0005524">
    <property type="term" value="F:ATP binding"/>
    <property type="evidence" value="ECO:0007669"/>
    <property type="project" value="UniProtKB-UniRule"/>
</dbReference>
<dbReference type="GO" id="GO:0004828">
    <property type="term" value="F:serine-tRNA ligase activity"/>
    <property type="evidence" value="ECO:0007669"/>
    <property type="project" value="UniProtKB-UniRule"/>
</dbReference>
<dbReference type="GO" id="GO:0016260">
    <property type="term" value="P:selenocysteine biosynthetic process"/>
    <property type="evidence" value="ECO:0007669"/>
    <property type="project" value="UniProtKB-UniRule"/>
</dbReference>
<dbReference type="GO" id="GO:0006434">
    <property type="term" value="P:seryl-tRNA aminoacylation"/>
    <property type="evidence" value="ECO:0007669"/>
    <property type="project" value="UniProtKB-UniRule"/>
</dbReference>
<dbReference type="CDD" id="cd00770">
    <property type="entry name" value="SerRS_core"/>
    <property type="match status" value="1"/>
</dbReference>
<dbReference type="Gene3D" id="3.30.930.10">
    <property type="entry name" value="Bira Bifunctional Protein, Domain 2"/>
    <property type="match status" value="1"/>
</dbReference>
<dbReference type="Gene3D" id="1.10.287.40">
    <property type="entry name" value="Serine-tRNA synthetase, tRNA binding domain"/>
    <property type="match status" value="1"/>
</dbReference>
<dbReference type="HAMAP" id="MF_00176">
    <property type="entry name" value="Ser_tRNA_synth_type1"/>
    <property type="match status" value="1"/>
</dbReference>
<dbReference type="InterPro" id="IPR002314">
    <property type="entry name" value="aa-tRNA-synt_IIb"/>
</dbReference>
<dbReference type="InterPro" id="IPR006195">
    <property type="entry name" value="aa-tRNA-synth_II"/>
</dbReference>
<dbReference type="InterPro" id="IPR045864">
    <property type="entry name" value="aa-tRNA-synth_II/BPL/LPL"/>
</dbReference>
<dbReference type="InterPro" id="IPR002317">
    <property type="entry name" value="Ser-tRNA-ligase_type_1"/>
</dbReference>
<dbReference type="InterPro" id="IPR015866">
    <property type="entry name" value="Ser-tRNA-synth_1_N"/>
</dbReference>
<dbReference type="InterPro" id="IPR042103">
    <property type="entry name" value="SerRS_1_N_sf"/>
</dbReference>
<dbReference type="InterPro" id="IPR033729">
    <property type="entry name" value="SerRS_core"/>
</dbReference>
<dbReference type="InterPro" id="IPR010978">
    <property type="entry name" value="tRNA-bd_arm"/>
</dbReference>
<dbReference type="NCBIfam" id="TIGR00414">
    <property type="entry name" value="serS"/>
    <property type="match status" value="1"/>
</dbReference>
<dbReference type="PANTHER" id="PTHR43697:SF1">
    <property type="entry name" value="SERINE--TRNA LIGASE"/>
    <property type="match status" value="1"/>
</dbReference>
<dbReference type="PANTHER" id="PTHR43697">
    <property type="entry name" value="SERYL-TRNA SYNTHETASE"/>
    <property type="match status" value="1"/>
</dbReference>
<dbReference type="Pfam" id="PF02403">
    <property type="entry name" value="Seryl_tRNA_N"/>
    <property type="match status" value="1"/>
</dbReference>
<dbReference type="Pfam" id="PF00587">
    <property type="entry name" value="tRNA-synt_2b"/>
    <property type="match status" value="1"/>
</dbReference>
<dbReference type="PIRSF" id="PIRSF001529">
    <property type="entry name" value="Ser-tRNA-synth_IIa"/>
    <property type="match status" value="1"/>
</dbReference>
<dbReference type="PRINTS" id="PR00981">
    <property type="entry name" value="TRNASYNTHSER"/>
</dbReference>
<dbReference type="SUPFAM" id="SSF55681">
    <property type="entry name" value="Class II aaRS and biotin synthetases"/>
    <property type="match status" value="1"/>
</dbReference>
<dbReference type="SUPFAM" id="SSF46589">
    <property type="entry name" value="tRNA-binding arm"/>
    <property type="match status" value="1"/>
</dbReference>
<dbReference type="PROSITE" id="PS50862">
    <property type="entry name" value="AA_TRNA_LIGASE_II"/>
    <property type="match status" value="1"/>
</dbReference>
<reference key="1">
    <citation type="journal article" date="1999" name="Nature">
        <title>Evidence for lateral gene transfer between Archaea and Bacteria from genome sequence of Thermotoga maritima.</title>
        <authorList>
            <person name="Nelson K.E."/>
            <person name="Clayton R.A."/>
            <person name="Gill S.R."/>
            <person name="Gwinn M.L."/>
            <person name="Dodson R.J."/>
            <person name="Haft D.H."/>
            <person name="Hickey E.K."/>
            <person name="Peterson J.D."/>
            <person name="Nelson W.C."/>
            <person name="Ketchum K.A."/>
            <person name="McDonald L.A."/>
            <person name="Utterback T.R."/>
            <person name="Malek J.A."/>
            <person name="Linher K.D."/>
            <person name="Garrett M.M."/>
            <person name="Stewart A.M."/>
            <person name="Cotton M.D."/>
            <person name="Pratt M.S."/>
            <person name="Phillips C.A."/>
            <person name="Richardson D.L."/>
            <person name="Heidelberg J.F."/>
            <person name="Sutton G.G."/>
            <person name="Fleischmann R.D."/>
            <person name="Eisen J.A."/>
            <person name="White O."/>
            <person name="Salzberg S.L."/>
            <person name="Smith H.O."/>
            <person name="Venter J.C."/>
            <person name="Fraser C.M."/>
        </authorList>
    </citation>
    <scope>NUCLEOTIDE SEQUENCE [LARGE SCALE GENOMIC DNA]</scope>
    <source>
        <strain>ATCC 43589 / DSM 3109 / JCM 10099 / NBRC 100826 / MSB8</strain>
    </source>
</reference>